<keyword id="KW-0067">ATP-binding</keyword>
<keyword id="KW-0997">Cell inner membrane</keyword>
<keyword id="KW-1003">Cell membrane</keyword>
<keyword id="KW-0472">Membrane</keyword>
<keyword id="KW-0547">Nucleotide-binding</keyword>
<keyword id="KW-0677">Repeat</keyword>
<keyword id="KW-0762">Sugar transport</keyword>
<keyword id="KW-1278">Translocase</keyword>
<keyword id="KW-0813">Transport</keyword>
<evidence type="ECO:0000255" key="1">
    <source>
        <dbReference type="HAMAP-Rule" id="MF_01721"/>
    </source>
</evidence>
<organism>
    <name type="scientific">Vibrio parahaemolyticus serotype O3:K6 (strain RIMD 2210633)</name>
    <dbReference type="NCBI Taxonomy" id="223926"/>
    <lineage>
        <taxon>Bacteria</taxon>
        <taxon>Pseudomonadati</taxon>
        <taxon>Pseudomonadota</taxon>
        <taxon>Gammaproteobacteria</taxon>
        <taxon>Vibrionales</taxon>
        <taxon>Vibrionaceae</taxon>
        <taxon>Vibrio</taxon>
    </lineage>
</organism>
<reference key="1">
    <citation type="journal article" date="2003" name="Lancet">
        <title>Genome sequence of Vibrio parahaemolyticus: a pathogenic mechanism distinct from that of V. cholerae.</title>
        <authorList>
            <person name="Makino K."/>
            <person name="Oshima K."/>
            <person name="Kurokawa K."/>
            <person name="Yokoyama K."/>
            <person name="Uda T."/>
            <person name="Tagomori K."/>
            <person name="Iijima Y."/>
            <person name="Najima M."/>
            <person name="Nakano M."/>
            <person name="Yamashita A."/>
            <person name="Kubota Y."/>
            <person name="Kimura S."/>
            <person name="Yasunaga T."/>
            <person name="Honda T."/>
            <person name="Shinagawa H."/>
            <person name="Hattori M."/>
            <person name="Iida T."/>
        </authorList>
    </citation>
    <scope>NUCLEOTIDE SEQUENCE [LARGE SCALE GENOMIC DNA]</scope>
    <source>
        <strain>RIMD 2210633</strain>
    </source>
</reference>
<sequence length="506" mass="55733">MIMINSPSYLEFCNISKHFPGVKALSNISFRANKGSIHALMGENGAGKSTLLKTLSGLHQPTEGELVVDGKALVFNSATDALEQGIAIIYQELNLVPELSVAENIYLGQLPTKGGSVDVETLNARAREQLKRLGEDFDPSRPLKEFSIGQWQMVEIAKALSRNAQIIAFDEPTSSLSQREIQNLFKVIRELRDDGKIILYVSHRMEEIFDLCDAITIFKDGTHVQTFDDMTDLTHEKLVELMVGREINDIYNYRSRSLGESGLRIENLEGKGLTQPVSLDIRQGEILGLFGLVGAGRTELTRLIFGAEKAQAGQIYIHGQPISVRSPQDAIRAGITLCPEDRKADAIVPILSVEENTNISARPWNLKLGGLIDFKWERDNAEQQRKALNVKTASLQQAIGQLSGGNQQKVILGRWLSTDMSVILLDEPTRGIDVGAKSEIYELIFNLAERGVTVLVVSSDLPEVLGISDRVMVMKEGAVTGELQRHEFKEQTALSLAMLGNNQAAA</sequence>
<name>ARAG_VIBPA</name>
<comment type="function">
    <text evidence="1">Part of the ABC transporter complex AraFGH involved in arabinose import. Responsible for energy coupling to the transport system.</text>
</comment>
<comment type="catalytic activity">
    <reaction evidence="1">
        <text>L-arabinose(out) + ATP + H2O = L-arabinose(in) + ADP + phosphate + H(+)</text>
        <dbReference type="Rhea" id="RHEA:30007"/>
        <dbReference type="ChEBI" id="CHEBI:15377"/>
        <dbReference type="ChEBI" id="CHEBI:15378"/>
        <dbReference type="ChEBI" id="CHEBI:17535"/>
        <dbReference type="ChEBI" id="CHEBI:30616"/>
        <dbReference type="ChEBI" id="CHEBI:43474"/>
        <dbReference type="ChEBI" id="CHEBI:456216"/>
        <dbReference type="EC" id="7.5.2.12"/>
    </reaction>
</comment>
<comment type="subunit">
    <text evidence="1">The complex is composed of two ATP-binding proteins (AraG), two transmembrane proteins (AraH) and a solute-binding protein (AraF).</text>
</comment>
<comment type="subcellular location">
    <subcellularLocation>
        <location evidence="1">Cell inner membrane</location>
        <topology evidence="1">Peripheral membrane protein</topology>
    </subcellularLocation>
</comment>
<comment type="similarity">
    <text evidence="1">Belongs to the ABC transporter superfamily. Arabinose importer (TC 3.A.1.2.2) family.</text>
</comment>
<proteinExistence type="inferred from homology"/>
<accession>Q87FK7</accession>
<protein>
    <recommendedName>
        <fullName evidence="1">Arabinose import ATP-binding protein AraG</fullName>
        <ecNumber evidence="1">7.5.2.12</ecNumber>
    </recommendedName>
</protein>
<gene>
    <name evidence="1" type="primary">araG</name>
    <name type="ordered locus">VPA1672</name>
</gene>
<dbReference type="EC" id="7.5.2.12" evidence="1"/>
<dbReference type="EMBL" id="BA000032">
    <property type="protein sequence ID" value="BAC63015.1"/>
    <property type="molecule type" value="Genomic_DNA"/>
</dbReference>
<dbReference type="RefSeq" id="NP_801182.1">
    <property type="nucleotide sequence ID" value="NC_004605.1"/>
</dbReference>
<dbReference type="SMR" id="Q87FK7"/>
<dbReference type="KEGG" id="vpa:VPA1672"/>
<dbReference type="PATRIC" id="fig|223926.6.peg.4590"/>
<dbReference type="eggNOG" id="COG1129">
    <property type="taxonomic scope" value="Bacteria"/>
</dbReference>
<dbReference type="HOGENOM" id="CLU_000604_92_3_6"/>
<dbReference type="Proteomes" id="UP000002493">
    <property type="component" value="Chromosome 2"/>
</dbReference>
<dbReference type="GO" id="GO:0005886">
    <property type="term" value="C:plasma membrane"/>
    <property type="evidence" value="ECO:0007669"/>
    <property type="project" value="UniProtKB-SubCell"/>
</dbReference>
<dbReference type="GO" id="GO:0015612">
    <property type="term" value="F:ABC-type L-arabinose transporter activity"/>
    <property type="evidence" value="ECO:0007669"/>
    <property type="project" value="UniProtKB-EC"/>
</dbReference>
<dbReference type="GO" id="GO:0005524">
    <property type="term" value="F:ATP binding"/>
    <property type="evidence" value="ECO:0007669"/>
    <property type="project" value="UniProtKB-KW"/>
</dbReference>
<dbReference type="GO" id="GO:0016887">
    <property type="term" value="F:ATP hydrolysis activity"/>
    <property type="evidence" value="ECO:0007669"/>
    <property type="project" value="InterPro"/>
</dbReference>
<dbReference type="CDD" id="cd03216">
    <property type="entry name" value="ABC_Carb_Monos_I"/>
    <property type="match status" value="1"/>
</dbReference>
<dbReference type="CDD" id="cd03215">
    <property type="entry name" value="ABC_Carb_Monos_II"/>
    <property type="match status" value="1"/>
</dbReference>
<dbReference type="FunFam" id="3.40.50.300:FF:000126">
    <property type="entry name" value="Galactose/methyl galactoside import ATP-binding protein MglA"/>
    <property type="match status" value="1"/>
</dbReference>
<dbReference type="FunFam" id="3.40.50.300:FF:000127">
    <property type="entry name" value="Ribose import ATP-binding protein RbsA"/>
    <property type="match status" value="1"/>
</dbReference>
<dbReference type="Gene3D" id="3.40.50.300">
    <property type="entry name" value="P-loop containing nucleotide triphosphate hydrolases"/>
    <property type="match status" value="2"/>
</dbReference>
<dbReference type="InterPro" id="IPR003593">
    <property type="entry name" value="AAA+_ATPase"/>
</dbReference>
<dbReference type="InterPro" id="IPR050107">
    <property type="entry name" value="ABC_carbohydrate_import_ATPase"/>
</dbReference>
<dbReference type="InterPro" id="IPR003439">
    <property type="entry name" value="ABC_transporter-like_ATP-bd"/>
</dbReference>
<dbReference type="InterPro" id="IPR017871">
    <property type="entry name" value="ABC_transporter-like_CS"/>
</dbReference>
<dbReference type="InterPro" id="IPR027417">
    <property type="entry name" value="P-loop_NTPase"/>
</dbReference>
<dbReference type="NCBIfam" id="NF008442">
    <property type="entry name" value="PRK11288.1"/>
    <property type="match status" value="1"/>
</dbReference>
<dbReference type="PANTHER" id="PTHR43790:SF6">
    <property type="entry name" value="ARABINOSE IMPORT ATP-BINDING PROTEIN ARAG"/>
    <property type="match status" value="1"/>
</dbReference>
<dbReference type="PANTHER" id="PTHR43790">
    <property type="entry name" value="CARBOHYDRATE TRANSPORT ATP-BINDING PROTEIN MG119-RELATED"/>
    <property type="match status" value="1"/>
</dbReference>
<dbReference type="Pfam" id="PF00005">
    <property type="entry name" value="ABC_tran"/>
    <property type="match status" value="2"/>
</dbReference>
<dbReference type="SMART" id="SM00382">
    <property type="entry name" value="AAA"/>
    <property type="match status" value="2"/>
</dbReference>
<dbReference type="SUPFAM" id="SSF52540">
    <property type="entry name" value="P-loop containing nucleoside triphosphate hydrolases"/>
    <property type="match status" value="2"/>
</dbReference>
<dbReference type="PROSITE" id="PS00211">
    <property type="entry name" value="ABC_TRANSPORTER_1"/>
    <property type="match status" value="1"/>
</dbReference>
<dbReference type="PROSITE" id="PS50893">
    <property type="entry name" value="ABC_TRANSPORTER_2"/>
    <property type="match status" value="2"/>
</dbReference>
<dbReference type="PROSITE" id="PS51268">
    <property type="entry name" value="ARAG"/>
    <property type="match status" value="1"/>
</dbReference>
<feature type="chain" id="PRO_0000270482" description="Arabinose import ATP-binding protein AraG">
    <location>
        <begin position="1"/>
        <end position="506"/>
    </location>
</feature>
<feature type="domain" description="ABC transporter 1" evidence="1">
    <location>
        <begin position="10"/>
        <end position="245"/>
    </location>
</feature>
<feature type="domain" description="ABC transporter 2" evidence="1">
    <location>
        <begin position="253"/>
        <end position="501"/>
    </location>
</feature>
<feature type="binding site" evidence="1">
    <location>
        <begin position="42"/>
        <end position="49"/>
    </location>
    <ligand>
        <name>ATP</name>
        <dbReference type="ChEBI" id="CHEBI:30616"/>
    </ligand>
</feature>